<proteinExistence type="inferred from homology"/>
<reference key="1">
    <citation type="journal article" date="2009" name="BMC Genomics">
        <title>Metabolic analysis of the soil microbe Dechloromonas aromatica str. RCB: indications of a surprisingly complex life-style and cryptic anaerobic pathways for aromatic degradation.</title>
        <authorList>
            <person name="Salinero K.K."/>
            <person name="Keller K."/>
            <person name="Feil W.S."/>
            <person name="Feil H."/>
            <person name="Trong S."/>
            <person name="Di Bartolo G."/>
            <person name="Lapidus A."/>
        </authorList>
    </citation>
    <scope>NUCLEOTIDE SEQUENCE [LARGE SCALE GENOMIC DNA]</scope>
    <source>
        <strain>RCB</strain>
    </source>
</reference>
<accession>Q47B65</accession>
<gene>
    <name evidence="1" type="primary">panC</name>
    <name type="ordered locus">Daro_3186</name>
</gene>
<sequence>MQIHSSIADLRSALKNRGRVVFVPTMGNLHAGHISLMTQARAHGDTVVASIFVNRLQFGPNEDFDKYPRTFQADCDKLAAAGVDVLFAPTEADLYPEPQEYTVEPPAIQNILDGEFRPGHFRGVATVVLKLFNCVQPQAAMFGKKDYQQLMVIRNMTRQLALPIDIIGGETVRAEDGLALSSRNGYLSAAERTEAPRLYRLLNEIRAAIRAGETDTVKLENEAIAALTAAGWKNDYVAVRQQSDLSMPKGVNAPLVALAASRLGSTRLIDNIEI</sequence>
<dbReference type="EC" id="6.3.2.1" evidence="1"/>
<dbReference type="EMBL" id="CP000089">
    <property type="protein sequence ID" value="AAZ47916.1"/>
    <property type="molecule type" value="Genomic_DNA"/>
</dbReference>
<dbReference type="SMR" id="Q47B65"/>
<dbReference type="STRING" id="159087.Daro_3186"/>
<dbReference type="KEGG" id="dar:Daro_3186"/>
<dbReference type="eggNOG" id="COG0414">
    <property type="taxonomic scope" value="Bacteria"/>
</dbReference>
<dbReference type="HOGENOM" id="CLU_047148_0_0_4"/>
<dbReference type="OrthoDB" id="9773087at2"/>
<dbReference type="UniPathway" id="UPA00028">
    <property type="reaction ID" value="UER00005"/>
</dbReference>
<dbReference type="GO" id="GO:0005829">
    <property type="term" value="C:cytosol"/>
    <property type="evidence" value="ECO:0007669"/>
    <property type="project" value="TreeGrafter"/>
</dbReference>
<dbReference type="GO" id="GO:0005524">
    <property type="term" value="F:ATP binding"/>
    <property type="evidence" value="ECO:0007669"/>
    <property type="project" value="UniProtKB-KW"/>
</dbReference>
<dbReference type="GO" id="GO:0004592">
    <property type="term" value="F:pantoate-beta-alanine ligase activity"/>
    <property type="evidence" value="ECO:0007669"/>
    <property type="project" value="UniProtKB-UniRule"/>
</dbReference>
<dbReference type="GO" id="GO:0015940">
    <property type="term" value="P:pantothenate biosynthetic process"/>
    <property type="evidence" value="ECO:0007669"/>
    <property type="project" value="UniProtKB-UniRule"/>
</dbReference>
<dbReference type="CDD" id="cd00560">
    <property type="entry name" value="PanC"/>
    <property type="match status" value="1"/>
</dbReference>
<dbReference type="FunFam" id="3.30.1300.10:FF:000001">
    <property type="entry name" value="Pantothenate synthetase"/>
    <property type="match status" value="1"/>
</dbReference>
<dbReference type="Gene3D" id="3.40.50.620">
    <property type="entry name" value="HUPs"/>
    <property type="match status" value="1"/>
</dbReference>
<dbReference type="Gene3D" id="3.30.1300.10">
    <property type="entry name" value="Pantoate-beta-alanine ligase, C-terminal domain"/>
    <property type="match status" value="1"/>
</dbReference>
<dbReference type="HAMAP" id="MF_00158">
    <property type="entry name" value="PanC"/>
    <property type="match status" value="1"/>
</dbReference>
<dbReference type="InterPro" id="IPR004821">
    <property type="entry name" value="Cyt_trans-like"/>
</dbReference>
<dbReference type="InterPro" id="IPR003721">
    <property type="entry name" value="Pantoate_ligase"/>
</dbReference>
<dbReference type="InterPro" id="IPR042176">
    <property type="entry name" value="Pantoate_ligase_C"/>
</dbReference>
<dbReference type="InterPro" id="IPR014729">
    <property type="entry name" value="Rossmann-like_a/b/a_fold"/>
</dbReference>
<dbReference type="NCBIfam" id="TIGR00125">
    <property type="entry name" value="cyt_tran_rel"/>
    <property type="match status" value="1"/>
</dbReference>
<dbReference type="NCBIfam" id="TIGR00018">
    <property type="entry name" value="panC"/>
    <property type="match status" value="1"/>
</dbReference>
<dbReference type="PANTHER" id="PTHR21299">
    <property type="entry name" value="CYTIDYLATE KINASE/PANTOATE-BETA-ALANINE LIGASE"/>
    <property type="match status" value="1"/>
</dbReference>
<dbReference type="PANTHER" id="PTHR21299:SF1">
    <property type="entry name" value="PANTOATE--BETA-ALANINE LIGASE"/>
    <property type="match status" value="1"/>
</dbReference>
<dbReference type="Pfam" id="PF02569">
    <property type="entry name" value="Pantoate_ligase"/>
    <property type="match status" value="1"/>
</dbReference>
<dbReference type="SUPFAM" id="SSF52374">
    <property type="entry name" value="Nucleotidylyl transferase"/>
    <property type="match status" value="1"/>
</dbReference>
<protein>
    <recommendedName>
        <fullName evidence="1">Pantothenate synthetase</fullName>
        <shortName evidence="1">PS</shortName>
        <ecNumber evidence="1">6.3.2.1</ecNumber>
    </recommendedName>
    <alternativeName>
        <fullName evidence="1">Pantoate--beta-alanine ligase</fullName>
    </alternativeName>
    <alternativeName>
        <fullName evidence="1">Pantoate-activating enzyme</fullName>
    </alternativeName>
</protein>
<evidence type="ECO:0000255" key="1">
    <source>
        <dbReference type="HAMAP-Rule" id="MF_00158"/>
    </source>
</evidence>
<feature type="chain" id="PRO_0000305434" description="Pantothenate synthetase">
    <location>
        <begin position="1"/>
        <end position="274"/>
    </location>
</feature>
<feature type="active site" description="Proton donor" evidence="1">
    <location>
        <position position="33"/>
    </location>
</feature>
<feature type="binding site" evidence="1">
    <location>
        <begin position="26"/>
        <end position="33"/>
    </location>
    <ligand>
        <name>ATP</name>
        <dbReference type="ChEBI" id="CHEBI:30616"/>
    </ligand>
</feature>
<feature type="binding site" evidence="1">
    <location>
        <position position="57"/>
    </location>
    <ligand>
        <name>(R)-pantoate</name>
        <dbReference type="ChEBI" id="CHEBI:15980"/>
    </ligand>
</feature>
<feature type="binding site" evidence="1">
    <location>
        <position position="57"/>
    </location>
    <ligand>
        <name>beta-alanine</name>
        <dbReference type="ChEBI" id="CHEBI:57966"/>
    </ligand>
</feature>
<feature type="binding site" evidence="1">
    <location>
        <begin position="143"/>
        <end position="146"/>
    </location>
    <ligand>
        <name>ATP</name>
        <dbReference type="ChEBI" id="CHEBI:30616"/>
    </ligand>
</feature>
<feature type="binding site" evidence="1">
    <location>
        <position position="149"/>
    </location>
    <ligand>
        <name>(R)-pantoate</name>
        <dbReference type="ChEBI" id="CHEBI:15980"/>
    </ligand>
</feature>
<feature type="binding site" evidence="1">
    <location>
        <position position="172"/>
    </location>
    <ligand>
        <name>ATP</name>
        <dbReference type="ChEBI" id="CHEBI:30616"/>
    </ligand>
</feature>
<feature type="binding site" evidence="1">
    <location>
        <begin position="180"/>
        <end position="183"/>
    </location>
    <ligand>
        <name>ATP</name>
        <dbReference type="ChEBI" id="CHEBI:30616"/>
    </ligand>
</feature>
<name>PANC_DECAR</name>
<comment type="function">
    <text evidence="1">Catalyzes the condensation of pantoate with beta-alanine in an ATP-dependent reaction via a pantoyl-adenylate intermediate.</text>
</comment>
<comment type="catalytic activity">
    <reaction evidence="1">
        <text>(R)-pantoate + beta-alanine + ATP = (R)-pantothenate + AMP + diphosphate + H(+)</text>
        <dbReference type="Rhea" id="RHEA:10912"/>
        <dbReference type="ChEBI" id="CHEBI:15378"/>
        <dbReference type="ChEBI" id="CHEBI:15980"/>
        <dbReference type="ChEBI" id="CHEBI:29032"/>
        <dbReference type="ChEBI" id="CHEBI:30616"/>
        <dbReference type="ChEBI" id="CHEBI:33019"/>
        <dbReference type="ChEBI" id="CHEBI:57966"/>
        <dbReference type="ChEBI" id="CHEBI:456215"/>
        <dbReference type="EC" id="6.3.2.1"/>
    </reaction>
</comment>
<comment type="pathway">
    <text evidence="1">Cofactor biosynthesis; (R)-pantothenate biosynthesis; (R)-pantothenate from (R)-pantoate and beta-alanine: step 1/1.</text>
</comment>
<comment type="subunit">
    <text evidence="1">Homodimer.</text>
</comment>
<comment type="subcellular location">
    <subcellularLocation>
        <location evidence="1">Cytoplasm</location>
    </subcellularLocation>
</comment>
<comment type="miscellaneous">
    <text evidence="1">The reaction proceeds by a bi uni uni bi ping pong mechanism.</text>
</comment>
<comment type="similarity">
    <text evidence="1">Belongs to the pantothenate synthetase family.</text>
</comment>
<organism>
    <name type="scientific">Dechloromonas aromatica (strain RCB)</name>
    <dbReference type="NCBI Taxonomy" id="159087"/>
    <lineage>
        <taxon>Bacteria</taxon>
        <taxon>Pseudomonadati</taxon>
        <taxon>Pseudomonadota</taxon>
        <taxon>Betaproteobacteria</taxon>
        <taxon>Rhodocyclales</taxon>
        <taxon>Azonexaceae</taxon>
        <taxon>Dechloromonas</taxon>
    </lineage>
</organism>
<keyword id="KW-0067">ATP-binding</keyword>
<keyword id="KW-0963">Cytoplasm</keyword>
<keyword id="KW-0436">Ligase</keyword>
<keyword id="KW-0547">Nucleotide-binding</keyword>
<keyword id="KW-0566">Pantothenate biosynthesis</keyword>